<reference key="1">
    <citation type="journal article" date="1996" name="Mol. Biol. Evol.">
        <title>Phylogeny and substitution rates of angiosperm actin genes.</title>
        <authorList>
            <person name="Moniz de Sa M."/>
            <person name="Drouin G."/>
        </authorList>
    </citation>
    <scope>NUCLEOTIDE SEQUENCE [GENOMIC DNA]</scope>
</reference>
<keyword id="KW-0067">ATP-binding</keyword>
<keyword id="KW-0963">Cytoplasm</keyword>
<keyword id="KW-0206">Cytoskeleton</keyword>
<keyword id="KW-0378">Hydrolase</keyword>
<keyword id="KW-0547">Nucleotide-binding</keyword>
<keyword id="KW-1185">Reference proteome</keyword>
<protein>
    <recommendedName>
        <fullName>Actin-66</fullName>
        <ecNumber evidence="1">3.6.4.-</ecNumber>
    </recommendedName>
</protein>
<evidence type="ECO:0000250" key="1">
    <source>
        <dbReference type="UniProtKB" id="P68137"/>
    </source>
</evidence>
<evidence type="ECO:0000305" key="2"/>
<accession>P81228</accession>
<organism>
    <name type="scientific">Solanum tuberosum</name>
    <name type="common">Potato</name>
    <dbReference type="NCBI Taxonomy" id="4113"/>
    <lineage>
        <taxon>Eukaryota</taxon>
        <taxon>Viridiplantae</taxon>
        <taxon>Streptophyta</taxon>
        <taxon>Embryophyta</taxon>
        <taxon>Tracheophyta</taxon>
        <taxon>Spermatophyta</taxon>
        <taxon>Magnoliopsida</taxon>
        <taxon>eudicotyledons</taxon>
        <taxon>Gunneridae</taxon>
        <taxon>Pentapetalae</taxon>
        <taxon>asterids</taxon>
        <taxon>lamiids</taxon>
        <taxon>Solanales</taxon>
        <taxon>Solanaceae</taxon>
        <taxon>Solanoideae</taxon>
        <taxon>Solaneae</taxon>
        <taxon>Solanum</taxon>
    </lineage>
</organism>
<dbReference type="EC" id="3.6.4.-" evidence="1"/>
<dbReference type="EMBL" id="U60485">
    <property type="protein sequence ID" value="AAB40098.1"/>
    <property type="molecule type" value="Genomic_DNA"/>
</dbReference>
<dbReference type="SMR" id="P81228"/>
<dbReference type="STRING" id="4113.P81228"/>
<dbReference type="InParanoid" id="P81228"/>
<dbReference type="Proteomes" id="UP000011115">
    <property type="component" value="Unassembled WGS sequence"/>
</dbReference>
<dbReference type="ExpressionAtlas" id="P81228">
    <property type="expression patterns" value="baseline and differential"/>
</dbReference>
<dbReference type="GO" id="GO:0015629">
    <property type="term" value="C:actin cytoskeleton"/>
    <property type="evidence" value="ECO:0000318"/>
    <property type="project" value="GO_Central"/>
</dbReference>
<dbReference type="GO" id="GO:0005737">
    <property type="term" value="C:cytoplasm"/>
    <property type="evidence" value="ECO:0007669"/>
    <property type="project" value="UniProtKB-KW"/>
</dbReference>
<dbReference type="GO" id="GO:0005524">
    <property type="term" value="F:ATP binding"/>
    <property type="evidence" value="ECO:0007669"/>
    <property type="project" value="UniProtKB-KW"/>
</dbReference>
<dbReference type="GO" id="GO:0016787">
    <property type="term" value="F:hydrolase activity"/>
    <property type="evidence" value="ECO:0007669"/>
    <property type="project" value="UniProtKB-KW"/>
</dbReference>
<dbReference type="CDD" id="cd10224">
    <property type="entry name" value="ASKHA_NBD_actin"/>
    <property type="match status" value="1"/>
</dbReference>
<dbReference type="FunFam" id="2.30.36.70:FF:000001">
    <property type="entry name" value="Actin, alpha skeletal muscle"/>
    <property type="match status" value="1"/>
</dbReference>
<dbReference type="FunFam" id="3.30.420.40:FF:000291">
    <property type="entry name" value="Actin, alpha skeletal muscle"/>
    <property type="match status" value="1"/>
</dbReference>
<dbReference type="FunFam" id="3.90.640.10:FF:000001">
    <property type="entry name" value="Actin, muscle"/>
    <property type="match status" value="1"/>
</dbReference>
<dbReference type="FunFam" id="3.30.420.40:FF:000404">
    <property type="entry name" value="Major actin"/>
    <property type="match status" value="1"/>
</dbReference>
<dbReference type="Gene3D" id="3.30.420.40">
    <property type="match status" value="2"/>
</dbReference>
<dbReference type="Gene3D" id="3.90.640.10">
    <property type="entry name" value="Actin, Chain A, domain 4"/>
    <property type="match status" value="1"/>
</dbReference>
<dbReference type="InterPro" id="IPR004000">
    <property type="entry name" value="Actin"/>
</dbReference>
<dbReference type="InterPro" id="IPR020902">
    <property type="entry name" value="Actin/actin-like_CS"/>
</dbReference>
<dbReference type="InterPro" id="IPR004001">
    <property type="entry name" value="Actin_CS"/>
</dbReference>
<dbReference type="InterPro" id="IPR043129">
    <property type="entry name" value="ATPase_NBD"/>
</dbReference>
<dbReference type="PANTHER" id="PTHR11937">
    <property type="entry name" value="ACTIN"/>
    <property type="match status" value="1"/>
</dbReference>
<dbReference type="Pfam" id="PF00022">
    <property type="entry name" value="Actin"/>
    <property type="match status" value="1"/>
</dbReference>
<dbReference type="PRINTS" id="PR00190">
    <property type="entry name" value="ACTIN"/>
</dbReference>
<dbReference type="SMART" id="SM00268">
    <property type="entry name" value="ACTIN"/>
    <property type="match status" value="1"/>
</dbReference>
<dbReference type="SUPFAM" id="SSF53067">
    <property type="entry name" value="Actin-like ATPase domain"/>
    <property type="match status" value="2"/>
</dbReference>
<dbReference type="PROSITE" id="PS00406">
    <property type="entry name" value="ACTINS_1"/>
    <property type="match status" value="1"/>
</dbReference>
<dbReference type="PROSITE" id="PS01132">
    <property type="entry name" value="ACTINS_ACT_LIKE"/>
    <property type="match status" value="1"/>
</dbReference>
<comment type="function">
    <text>Actins are highly conserved proteins that are involved in various types of cell motility and are ubiquitously expressed in all eukaryotic cells. Essential component of cell cytoskeleton; plays an important role in cytoplasmic streaming, cell shape determination, cell division, organelle movement and extension growth.</text>
</comment>
<comment type="catalytic activity">
    <reaction evidence="1">
        <text>ATP + H2O = ADP + phosphate + H(+)</text>
        <dbReference type="Rhea" id="RHEA:13065"/>
        <dbReference type="ChEBI" id="CHEBI:15377"/>
        <dbReference type="ChEBI" id="CHEBI:15378"/>
        <dbReference type="ChEBI" id="CHEBI:30616"/>
        <dbReference type="ChEBI" id="CHEBI:43474"/>
        <dbReference type="ChEBI" id="CHEBI:456216"/>
    </reaction>
</comment>
<comment type="subcellular location">
    <subcellularLocation>
        <location>Cytoplasm</location>
        <location>Cytoskeleton</location>
    </subcellularLocation>
</comment>
<comment type="miscellaneous">
    <text>There are at least 13 actin genes in potato.</text>
</comment>
<comment type="similarity">
    <text evidence="2">Belongs to the actin family.</text>
</comment>
<feature type="chain" id="PRO_0000089012" description="Actin-66">
    <location>
        <begin position="1" status="less than"/>
        <end position="336" status="greater than"/>
    </location>
</feature>
<feature type="non-terminal residue">
    <location>
        <position position="1"/>
    </location>
</feature>
<feature type="non-terminal residue">
    <location>
        <position position="336"/>
    </location>
</feature>
<sequence>AGFAGDDAPRAVFPSIVGRPRHTGVMVGMGQKDAYVGDEAQSKRGILTLKYPIEHGIVSNWDDMEKIWHHTFYNELRVAPEEHPVLLTEAPLNPKANREKMTQIMFETFNTPAMYVAIQAVLSLYASGRTTGIVLDSGDGVSHTVPIYEGYALPHAILRLDLAGRDLTDHLMKILTERGYSFTTTAEREIVRDVKEKLSYIALDYEQEIETAKTSSSVEKSYELPDGQVITIGAERFRCPEVLFQPSMIGMEAAGIHETTYNSIMKCDVDIRKDLYGNIVLSGGTTMFPGIADRMSKEITALAPSSMKIKVVAPPERKYSVWIGGSILASLSTFQQ</sequence>
<name>ACT5_SOLTU</name>
<proteinExistence type="inferred from homology"/>